<reference evidence="8 9" key="1">
    <citation type="journal article" date="1997" name="Insect Biochem. Mol. Biol.">
        <title>Subunit composition of pro-phenol oxidase from Manduca sexta: molecular cloning of subunit ProPO-P1.</title>
        <authorList>
            <person name="Jiang H."/>
            <person name="Wang Y."/>
            <person name="Ma C."/>
            <person name="Kanost M.R."/>
        </authorList>
    </citation>
    <scope>NUCLEOTIDE SEQUENCE [MRNA]</scope>
    <scope>SUBUNIT</scope>
    <scope>SUBCELLULAR LOCATION</scope>
    <scope>TISSUE SPECIFICITY</scope>
    <scope>BLOCKAGE OF N-TERMINUS</scope>
    <scope>MASS SPECTROMETRY</scope>
    <source>
        <tissue evidence="7">Hemocyte</tissue>
    </source>
</reference>
<reference evidence="8" key="2">
    <citation type="journal article" date="1996" name="J. Biol. Chem.">
        <title>Characterization of a defense complex consisting of interleukin 1 and phenol oxidase from the hemolymph of the tobacco hornworm, Manduca sexta.</title>
        <authorList>
            <person name="Beck G."/>
            <person name="Cardinale S."/>
            <person name="Wang L."/>
            <person name="Reiner M."/>
            <person name="Sugumaran M."/>
        </authorList>
    </citation>
    <scope>SUBUNIT</scope>
</reference>
<reference evidence="8" key="3">
    <citation type="journal article" date="1999" name="Insect Biochem. Mol. Biol.">
        <title>Immulectin, an inducible C-type lectin from an insect, Manduca sexta, stimulates activation of plasma prophenol oxidase.</title>
        <authorList>
            <person name="Yu X.-Q."/>
            <person name="Gan H."/>
            <person name="Kanost M.R."/>
        </authorList>
    </citation>
    <scope>ACTIVITY REGULATION</scope>
</reference>
<reference evidence="8" key="4">
    <citation type="journal article" date="2005" name="Insect Biochem. Mol. Biol.">
        <title>Prophenoloxidase binds to the surface of hemocytes and is involved in hemocyte melanization in Manduca sexta.</title>
        <authorList>
            <person name="Ling E."/>
            <person name="Yu X.-Q."/>
        </authorList>
    </citation>
    <scope>FUNCTION</scope>
</reference>
<reference key="5">
    <citation type="journal article" date="2009" name="Proc. Natl. Acad. Sci. U.S.A.">
        <title>Crystal structure of Manduca sexta prophenoloxidase provides insights into the mechanism of type 3 copper enzymes.</title>
        <authorList>
            <person name="Li Y."/>
            <person name="Wang Y."/>
            <person name="Jiang H."/>
            <person name="Deng J."/>
        </authorList>
    </citation>
    <scope>X-RAY CRYSTALLOGRAPHY (1.97 ANGSTROMS) IN COMPLEX WITH COPPER IONS</scope>
    <scope>COFACTOR</scope>
    <scope>SUBUNIT</scope>
    <scope>DISULFIDE BOND</scope>
</reference>
<name>PRP1_MANSE</name>
<protein>
    <recommendedName>
        <fullName>Phenoloxidase subunit 1</fullName>
        <ecNumber>1.14.18.1</ecNumber>
    </recommendedName>
    <alternativeName>
        <fullName>proPO-P1</fullName>
    </alternativeName>
</protein>
<organism>
    <name type="scientific">Manduca sexta</name>
    <name type="common">Tobacco hawkmoth</name>
    <name type="synonym">Tobacco hornworm</name>
    <dbReference type="NCBI Taxonomy" id="7130"/>
    <lineage>
        <taxon>Eukaryota</taxon>
        <taxon>Metazoa</taxon>
        <taxon>Ecdysozoa</taxon>
        <taxon>Arthropoda</taxon>
        <taxon>Hexapoda</taxon>
        <taxon>Insecta</taxon>
        <taxon>Pterygota</taxon>
        <taxon>Neoptera</taxon>
        <taxon>Endopterygota</taxon>
        <taxon>Lepidoptera</taxon>
        <taxon>Glossata</taxon>
        <taxon>Ditrysia</taxon>
        <taxon>Bombycoidea</taxon>
        <taxon>Sphingidae</taxon>
        <taxon>Sphinginae</taxon>
        <taxon>Sphingini</taxon>
        <taxon>Manduca</taxon>
    </lineage>
</organism>
<dbReference type="EC" id="1.14.18.1"/>
<dbReference type="EMBL" id="AF003253">
    <property type="protein sequence ID" value="AAC05796.1"/>
    <property type="molecule type" value="mRNA"/>
</dbReference>
<dbReference type="PDB" id="3HHS">
    <property type="method" value="X-ray"/>
    <property type="resolution" value="1.97 A"/>
    <property type="chains" value="B=2-685"/>
</dbReference>
<dbReference type="PDBsum" id="3HHS"/>
<dbReference type="SMR" id="O44249"/>
<dbReference type="DIP" id="DIP-48978N"/>
<dbReference type="IntAct" id="O44249">
    <property type="interactions" value="1"/>
</dbReference>
<dbReference type="OrthoDB" id="8119704at2759"/>
<dbReference type="EvolutionaryTrace" id="O44249"/>
<dbReference type="GO" id="GO:0005576">
    <property type="term" value="C:extracellular region"/>
    <property type="evidence" value="ECO:0000314"/>
    <property type="project" value="UniProtKB"/>
</dbReference>
<dbReference type="GO" id="GO:0031404">
    <property type="term" value="F:chloride ion binding"/>
    <property type="evidence" value="ECO:0000250"/>
    <property type="project" value="UniProtKB"/>
</dbReference>
<dbReference type="GO" id="GO:0005507">
    <property type="term" value="F:copper ion binding"/>
    <property type="evidence" value="ECO:0000250"/>
    <property type="project" value="UniProtKB"/>
</dbReference>
<dbReference type="GO" id="GO:0004503">
    <property type="term" value="F:tyrosinase activity"/>
    <property type="evidence" value="ECO:0000304"/>
    <property type="project" value="UniProtKB"/>
</dbReference>
<dbReference type="GO" id="GO:0006952">
    <property type="term" value="P:defense response"/>
    <property type="evidence" value="ECO:0000303"/>
    <property type="project" value="UniProtKB"/>
</dbReference>
<dbReference type="GO" id="GO:0006583">
    <property type="term" value="P:melanin biosynthetic process from tyrosine"/>
    <property type="evidence" value="ECO:0000304"/>
    <property type="project" value="UniProtKB"/>
</dbReference>
<dbReference type="GO" id="GO:0035008">
    <property type="term" value="P:positive regulation of melanization defense response"/>
    <property type="evidence" value="ECO:0000314"/>
    <property type="project" value="UniProtKB"/>
</dbReference>
<dbReference type="FunFam" id="1.10.1280.10:FF:000004">
    <property type="entry name" value="Hemocyanin subunit 2"/>
    <property type="match status" value="1"/>
</dbReference>
<dbReference type="FunFam" id="2.60.40.1520:FF:000001">
    <property type="entry name" value="Hemocyanin subunit 2"/>
    <property type="match status" value="1"/>
</dbReference>
<dbReference type="FunFam" id="1.20.1370.10:FF:000001">
    <property type="entry name" value="Phenoloxidase 2"/>
    <property type="match status" value="1"/>
</dbReference>
<dbReference type="Gene3D" id="1.10.1280.10">
    <property type="entry name" value="Di-copper center containing domain from catechol oxidase"/>
    <property type="match status" value="1"/>
</dbReference>
<dbReference type="Gene3D" id="2.60.40.1520">
    <property type="entry name" value="Hemocyanin, C-terminal domain"/>
    <property type="match status" value="1"/>
</dbReference>
<dbReference type="Gene3D" id="1.20.1370.10">
    <property type="entry name" value="Hemocyanin, N-terminal domain"/>
    <property type="match status" value="1"/>
</dbReference>
<dbReference type="InterPro" id="IPR008922">
    <property type="entry name" value="Di-copper_centre_dom_sf"/>
</dbReference>
<dbReference type="InterPro" id="IPR013788">
    <property type="entry name" value="Hemocyanin/hexamerin"/>
</dbReference>
<dbReference type="InterPro" id="IPR000896">
    <property type="entry name" value="Hemocyanin/hexamerin_mid_dom"/>
</dbReference>
<dbReference type="InterPro" id="IPR005203">
    <property type="entry name" value="Hemocyanin_C"/>
</dbReference>
<dbReference type="InterPro" id="IPR037020">
    <property type="entry name" value="Hemocyanin_C_sf"/>
</dbReference>
<dbReference type="InterPro" id="IPR005204">
    <property type="entry name" value="Hemocyanin_N"/>
</dbReference>
<dbReference type="InterPro" id="IPR036697">
    <property type="entry name" value="Hemocyanin_N_sf"/>
</dbReference>
<dbReference type="InterPro" id="IPR014756">
    <property type="entry name" value="Ig_E-set"/>
</dbReference>
<dbReference type="InterPro" id="IPR002227">
    <property type="entry name" value="Tyrosinase_Cu-bd"/>
</dbReference>
<dbReference type="PANTHER" id="PTHR11511">
    <property type="entry name" value="LARVAL STORAGE PROTEIN/PHENOLOXIDASE"/>
    <property type="match status" value="1"/>
</dbReference>
<dbReference type="PANTHER" id="PTHR11511:SF4">
    <property type="entry name" value="PHENOLOXIDASE 2-RELATED"/>
    <property type="match status" value="1"/>
</dbReference>
<dbReference type="Pfam" id="PF03723">
    <property type="entry name" value="Hemocyanin_C"/>
    <property type="match status" value="1"/>
</dbReference>
<dbReference type="Pfam" id="PF00372">
    <property type="entry name" value="Hemocyanin_M"/>
    <property type="match status" value="1"/>
</dbReference>
<dbReference type="Pfam" id="PF03722">
    <property type="entry name" value="Hemocyanin_N"/>
    <property type="match status" value="1"/>
</dbReference>
<dbReference type="PRINTS" id="PR00187">
    <property type="entry name" value="HAEMOCYANIN"/>
</dbReference>
<dbReference type="SUPFAM" id="SSF48056">
    <property type="entry name" value="Di-copper centre-containing domain"/>
    <property type="match status" value="1"/>
</dbReference>
<dbReference type="SUPFAM" id="SSF81296">
    <property type="entry name" value="E set domains"/>
    <property type="match status" value="1"/>
</dbReference>
<dbReference type="SUPFAM" id="SSF48050">
    <property type="entry name" value="Hemocyanin, N-terminal domain"/>
    <property type="match status" value="1"/>
</dbReference>
<dbReference type="PROSITE" id="PS00209">
    <property type="entry name" value="HEMOCYANIN_1"/>
    <property type="match status" value="1"/>
</dbReference>
<dbReference type="PROSITE" id="PS00210">
    <property type="entry name" value="HEMOCYANIN_2"/>
    <property type="match status" value="1"/>
</dbReference>
<dbReference type="PROSITE" id="PS00498">
    <property type="entry name" value="TYROSINASE_2"/>
    <property type="match status" value="1"/>
</dbReference>
<evidence type="ECO:0000250" key="1">
    <source>
        <dbReference type="UniProtKB" id="Q8MZM3"/>
    </source>
</evidence>
<evidence type="ECO:0000255" key="2"/>
<evidence type="ECO:0000269" key="3">
    <source>
    </source>
</evidence>
<evidence type="ECO:0000269" key="4">
    <source>
    </source>
</evidence>
<evidence type="ECO:0000269" key="5">
    <source>
    </source>
</evidence>
<evidence type="ECO:0000269" key="6">
    <source>
    </source>
</evidence>
<evidence type="ECO:0000269" key="7">
    <source>
    </source>
</evidence>
<evidence type="ECO:0000305" key="8"/>
<evidence type="ECO:0000312" key="9">
    <source>
        <dbReference type="EMBL" id="AAC05796.1"/>
    </source>
</evidence>
<evidence type="ECO:0007829" key="10">
    <source>
        <dbReference type="PDB" id="3HHS"/>
    </source>
</evidence>
<sequence>MTDAKNNLLYFFDRPNEPCFMQKGEDKVVFEIPDHYYPDKYKSLSNTLSNRFGNEATKRIPIRNITLPNLEVPMQLPYNDQFSLFVPKHRTMAAKLIDIFMGMRDVEDLQSVCSYCQLRINPYMFNYCLSVAILHRPDTKGLSIPTFAETFPDKFMDSKVFLRAREVSNVVISGSRMPVNVPINYTANTTEPEQRVAYFREDIGINLHHWHWHLVYPFDSADRSIVNKDRRGELFYYMHQQIIGRYNVERMCNGLPQVKPFSDFSAPIEEGYFPKLDSQVASRTWPPRFAGSVFRNLDRTVDQVKIDVRKLFTWRDQFLEAIQKMAIKMPNGRELPLDEVTGIDMLGNLMESSIISPNRGYYGDLHNMGHVFAAYTHDPDHRHLEQFGVMGDSATAMRDPFFYRWHRFVDDVFNIYKEKLTPYTNERLDFPGVRVSSVGIEGARPNTLRTLWQQSTVELGRGLDFTPRGSVLARFTHLQHDEFQYVIEVNNTTGGNLMGTVRIFMAPKVDDNGQPMSFNKQRRLMIELDKFSQALRPGTNTIRRRSVDSSVTIPYERTFRNQSERPGDPGTAGAAEFDFCGCGWPHHMLIPKGTAQGYPVVLFVMISNWNNDRIEQDLVGSCNDAASYCGIRDRKYPDKQAMGYPFDRKMANDAATLSDFLRPNMAVRDCSIQFSDTTVERGQQG</sequence>
<accession>O44249</accession>
<comment type="function">
    <text evidence="4 8">This is a copper-containing oxidase that functions in the formation of pigments such as melanins and other polyphenolic compounds. Catalyzes the rate-limiting conversions of tyrosine to DOPA, DOPA to DOPA-quinone and possibly 5,6 dihydroxyindole to indole-5'6 quinone. Binds to the surface of hemocytes and is involved in hemocyte melanization.</text>
</comment>
<comment type="catalytic activity">
    <reaction>
        <text>2 L-dopa + O2 = 2 L-dopaquinone + 2 H2O</text>
        <dbReference type="Rhea" id="RHEA:34287"/>
        <dbReference type="ChEBI" id="CHEBI:15377"/>
        <dbReference type="ChEBI" id="CHEBI:15379"/>
        <dbReference type="ChEBI" id="CHEBI:57504"/>
        <dbReference type="ChEBI" id="CHEBI:57924"/>
        <dbReference type="EC" id="1.14.18.1"/>
    </reaction>
</comment>
<comment type="catalytic activity">
    <reaction>
        <text>L-tyrosine + O2 = L-dopaquinone + H2O</text>
        <dbReference type="Rhea" id="RHEA:18117"/>
        <dbReference type="ChEBI" id="CHEBI:15377"/>
        <dbReference type="ChEBI" id="CHEBI:15379"/>
        <dbReference type="ChEBI" id="CHEBI:57924"/>
        <dbReference type="ChEBI" id="CHEBI:58315"/>
        <dbReference type="EC" id="1.14.18.1"/>
    </reaction>
</comment>
<comment type="cofactor">
    <cofactor evidence="5">
        <name>Cu(2+)</name>
        <dbReference type="ChEBI" id="CHEBI:29036"/>
    </cofactor>
    <text evidence="5">Binds 2 copper ions per subunit.</text>
</comment>
<comment type="activity regulation">
    <text evidence="3">Activated by immulectin and lipopolysaccharide.</text>
</comment>
<comment type="subunit">
    <text evidence="5 6 7">Heterodimer. Forms a complex with an interleukin 1-like protein as a consequence of a host defense response.</text>
</comment>
<comment type="subcellular location">
    <subcellularLocation>
        <location evidence="7">Secreted</location>
    </subcellularLocation>
</comment>
<comment type="tissue specificity">
    <text evidence="7">Synthesized by oenocytoids, a type of hemocyte, and released into the hemolymph plasma.</text>
</comment>
<comment type="PTM">
    <text evidence="7">The N-terminus is blocked.</text>
</comment>
<comment type="mass spectrometry"/>
<comment type="similarity">
    <text evidence="2">Belongs to the tyrosinase family.</text>
</comment>
<feature type="initiator methionine" description="Removed" evidence="8">
    <location>
        <position position="1"/>
    </location>
</feature>
<feature type="chain" id="PRO_0000234110" description="Phenoloxidase subunit 1">
    <location>
        <begin position="2"/>
        <end position="685"/>
    </location>
</feature>
<feature type="active site" description="Proton acceptor" evidence="1">
    <location>
        <position position="351"/>
    </location>
</feature>
<feature type="binding site" evidence="5">
    <location>
        <position position="209"/>
    </location>
    <ligand>
        <name>Cu cation</name>
        <dbReference type="ChEBI" id="CHEBI:23378"/>
        <label>A</label>
    </ligand>
</feature>
<feature type="binding site" evidence="5">
    <location>
        <position position="213"/>
    </location>
    <ligand>
        <name>Cu cation</name>
        <dbReference type="ChEBI" id="CHEBI:23378"/>
        <label>A</label>
    </ligand>
</feature>
<feature type="binding site" evidence="5">
    <location>
        <position position="239"/>
    </location>
    <ligand>
        <name>Cu cation</name>
        <dbReference type="ChEBI" id="CHEBI:23378"/>
        <label>A</label>
    </ligand>
</feature>
<feature type="binding site" evidence="5">
    <location>
        <position position="366"/>
    </location>
    <ligand>
        <name>Cu cation</name>
        <dbReference type="ChEBI" id="CHEBI:23378"/>
        <label>B</label>
    </ligand>
</feature>
<feature type="binding site" evidence="5">
    <location>
        <position position="370"/>
    </location>
    <ligand>
        <name>Cu cation</name>
        <dbReference type="ChEBI" id="CHEBI:23378"/>
        <label>B</label>
    </ligand>
</feature>
<feature type="binding site" evidence="5">
    <location>
        <position position="406"/>
    </location>
    <ligand>
        <name>Cu cation</name>
        <dbReference type="ChEBI" id="CHEBI:23378"/>
        <label>B</label>
    </ligand>
</feature>
<feature type="disulfide bond" evidence="5">
    <location>
        <begin position="580"/>
        <end position="622"/>
    </location>
</feature>
<feature type="disulfide bond" evidence="5">
    <location>
        <begin position="582"/>
        <end position="629"/>
    </location>
</feature>
<feature type="helix" evidence="10">
    <location>
        <begin position="4"/>
        <end position="7"/>
    </location>
</feature>
<feature type="helix" evidence="10">
    <location>
        <begin position="8"/>
        <end position="12"/>
    </location>
</feature>
<feature type="turn" evidence="10">
    <location>
        <begin position="24"/>
        <end position="27"/>
    </location>
</feature>
<feature type="strand" evidence="10">
    <location>
        <begin position="28"/>
        <end position="30"/>
    </location>
</feature>
<feature type="helix" evidence="10">
    <location>
        <begin position="34"/>
        <end position="36"/>
    </location>
</feature>
<feature type="helix" evidence="10">
    <location>
        <begin position="39"/>
        <end position="44"/>
    </location>
</feature>
<feature type="helix" evidence="10">
    <location>
        <begin position="45"/>
        <end position="53"/>
    </location>
</feature>
<feature type="strand" evidence="10">
    <location>
        <begin position="57"/>
        <end position="60"/>
    </location>
</feature>
<feature type="helix" evidence="10">
    <location>
        <begin position="73"/>
        <end position="75"/>
    </location>
</feature>
<feature type="helix" evidence="10">
    <location>
        <begin position="87"/>
        <end position="102"/>
    </location>
</feature>
<feature type="helix" evidence="10">
    <location>
        <begin position="106"/>
        <end position="117"/>
    </location>
</feature>
<feature type="helix" evidence="10">
    <location>
        <begin position="122"/>
        <end position="135"/>
    </location>
</feature>
<feature type="helix" evidence="10">
    <location>
        <begin position="137"/>
        <end position="139"/>
    </location>
</feature>
<feature type="helix" evidence="10">
    <location>
        <begin position="147"/>
        <end position="150"/>
    </location>
</feature>
<feature type="helix" evidence="10">
    <location>
        <begin position="152"/>
        <end position="154"/>
    </location>
</feature>
<feature type="helix" evidence="10">
    <location>
        <begin position="159"/>
        <end position="170"/>
    </location>
</feature>
<feature type="helix" evidence="10">
    <location>
        <begin position="192"/>
        <end position="196"/>
    </location>
</feature>
<feature type="helix" evidence="10">
    <location>
        <begin position="197"/>
        <end position="200"/>
    </location>
</feature>
<feature type="helix" evidence="10">
    <location>
        <begin position="203"/>
        <end position="215"/>
    </location>
</feature>
<feature type="helix" evidence="10">
    <location>
        <begin position="223"/>
        <end position="226"/>
    </location>
</feature>
<feature type="helix" evidence="10">
    <location>
        <begin position="231"/>
        <end position="252"/>
    </location>
</feature>
<feature type="turn" evidence="10">
    <location>
        <begin position="279"/>
        <end position="282"/>
    </location>
</feature>
<feature type="strand" evidence="10">
    <location>
        <begin position="297"/>
        <end position="299"/>
    </location>
</feature>
<feature type="helix" evidence="10">
    <location>
        <begin position="300"/>
        <end position="302"/>
    </location>
</feature>
<feature type="strand" evidence="10">
    <location>
        <begin position="304"/>
        <end position="306"/>
    </location>
</feature>
<feature type="helix" evidence="10">
    <location>
        <begin position="308"/>
        <end position="324"/>
    </location>
</feature>
<feature type="strand" evidence="10">
    <location>
        <begin position="326"/>
        <end position="328"/>
    </location>
</feature>
<feature type="strand" evidence="10">
    <location>
        <begin position="334"/>
        <end position="336"/>
    </location>
</feature>
<feature type="turn" evidence="10">
    <location>
        <begin position="339"/>
        <end position="341"/>
    </location>
</feature>
<feature type="helix" evidence="10">
    <location>
        <begin position="342"/>
        <end position="351"/>
    </location>
</feature>
<feature type="helix" evidence="10">
    <location>
        <begin position="359"/>
        <end position="362"/>
    </location>
</feature>
<feature type="helix" evidence="10">
    <location>
        <begin position="365"/>
        <end position="374"/>
    </location>
</feature>
<feature type="turn" evidence="10">
    <location>
        <begin position="375"/>
        <end position="377"/>
    </location>
</feature>
<feature type="helix" evidence="10">
    <location>
        <begin position="389"/>
        <end position="391"/>
    </location>
</feature>
<feature type="turn" evidence="10">
    <location>
        <begin position="393"/>
        <end position="395"/>
    </location>
</feature>
<feature type="helix" evidence="10">
    <location>
        <begin position="396"/>
        <end position="398"/>
    </location>
</feature>
<feature type="helix" evidence="10">
    <location>
        <begin position="400"/>
        <end position="417"/>
    </location>
</feature>
<feature type="helix" evidence="10">
    <location>
        <begin position="425"/>
        <end position="428"/>
    </location>
</feature>
<feature type="strand" evidence="10">
    <location>
        <begin position="433"/>
        <end position="440"/>
    </location>
</feature>
<feature type="strand" evidence="10">
    <location>
        <begin position="447"/>
        <end position="458"/>
    </location>
</feature>
<feature type="turn" evidence="10">
    <location>
        <begin position="460"/>
        <end position="462"/>
    </location>
</feature>
<feature type="strand" evidence="10">
    <location>
        <begin position="472"/>
        <end position="480"/>
    </location>
</feature>
<feature type="strand" evidence="10">
    <location>
        <begin position="484"/>
        <end position="491"/>
    </location>
</feature>
<feature type="strand" evidence="10">
    <location>
        <begin position="493"/>
        <end position="495"/>
    </location>
</feature>
<feature type="strand" evidence="10">
    <location>
        <begin position="497"/>
        <end position="509"/>
    </location>
</feature>
<feature type="helix" evidence="10">
    <location>
        <begin position="518"/>
        <end position="521"/>
    </location>
</feature>
<feature type="helix" evidence="10">
    <location>
        <begin position="522"/>
        <end position="524"/>
    </location>
</feature>
<feature type="strand" evidence="10">
    <location>
        <begin position="526"/>
        <end position="535"/>
    </location>
</feature>
<feature type="strand" evidence="10">
    <location>
        <begin position="537"/>
        <end position="545"/>
    </location>
</feature>
<feature type="helix" evidence="10">
    <location>
        <begin position="546"/>
        <end position="548"/>
    </location>
</feature>
<feature type="strand" evidence="10">
    <location>
        <begin position="550"/>
        <end position="553"/>
    </location>
</feature>
<feature type="helix" evidence="10">
    <location>
        <begin position="555"/>
        <end position="557"/>
    </location>
</feature>
<feature type="strand" evidence="10">
    <location>
        <begin position="583"/>
        <end position="585"/>
    </location>
</feature>
<feature type="helix" evidence="10">
    <location>
        <begin position="586"/>
        <end position="588"/>
    </location>
</feature>
<feature type="strand" evidence="10">
    <location>
        <begin position="598"/>
        <end position="608"/>
    </location>
</feature>
<feature type="helix" evidence="10">
    <location>
        <begin position="609"/>
        <end position="611"/>
    </location>
</feature>
<feature type="helix" evidence="10">
    <location>
        <begin position="626"/>
        <end position="629"/>
    </location>
</feature>
<feature type="turn" evidence="10">
    <location>
        <begin position="642"/>
        <end position="645"/>
    </location>
</feature>
<feature type="strand" evidence="10">
    <location>
        <begin position="646"/>
        <end position="648"/>
    </location>
</feature>
<feature type="helix" evidence="10">
    <location>
        <begin position="657"/>
        <end position="660"/>
    </location>
</feature>
<feature type="strand" evidence="10">
    <location>
        <begin position="665"/>
        <end position="679"/>
    </location>
</feature>
<proteinExistence type="evidence at protein level"/>
<keyword id="KW-0002">3D-structure</keyword>
<keyword id="KW-0186">Copper</keyword>
<keyword id="KW-1015">Disulfide bond</keyword>
<keyword id="KW-0470">Melanin biosynthesis</keyword>
<keyword id="KW-0479">Metal-binding</keyword>
<keyword id="KW-0503">Monooxygenase</keyword>
<keyword id="KW-0560">Oxidoreductase</keyword>
<keyword id="KW-0964">Secreted</keyword>